<accession>A5VJK2</accession>
<evidence type="ECO:0000255" key="1">
    <source>
        <dbReference type="HAMAP-Rule" id="MF_00238"/>
    </source>
</evidence>
<proteinExistence type="inferred from homology"/>
<sequence>MCKGLQVAIDGPASAGKSTVAKLVAKKFNYVYCDTGAMYRAVTLAVLNQGIDPKDDKKVAEIARQIKIDFEPGEIEQRVFLDGKEVTHDIRLPKVAANVSAVAAVPAVREEMTKQQRQIAENGGIVMDGRDIGTTVLPQAPVKIFMVASAYERARRRYAENQAKGINTTSLEELQKAIELRDKKDSTRKVSPLTQAPDAIKLDTTNMTIDEVVSEISKIIKKTQDELA</sequence>
<organism>
    <name type="scientific">Limosilactobacillus reuteri (strain DSM 20016)</name>
    <name type="common">Lactobacillus reuteri</name>
    <dbReference type="NCBI Taxonomy" id="557436"/>
    <lineage>
        <taxon>Bacteria</taxon>
        <taxon>Bacillati</taxon>
        <taxon>Bacillota</taxon>
        <taxon>Bacilli</taxon>
        <taxon>Lactobacillales</taxon>
        <taxon>Lactobacillaceae</taxon>
        <taxon>Limosilactobacillus</taxon>
    </lineage>
</organism>
<reference key="1">
    <citation type="journal article" date="2011" name="PLoS Genet.">
        <title>The evolution of host specialization in the vertebrate gut symbiont Lactobacillus reuteri.</title>
        <authorList>
            <person name="Frese S.A."/>
            <person name="Benson A.K."/>
            <person name="Tannock G.W."/>
            <person name="Loach D.M."/>
            <person name="Kim J."/>
            <person name="Zhang M."/>
            <person name="Oh P.L."/>
            <person name="Heng N.C."/>
            <person name="Patil P.B."/>
            <person name="Juge N."/>
            <person name="Mackenzie D.A."/>
            <person name="Pearson B.M."/>
            <person name="Lapidus A."/>
            <person name="Dalin E."/>
            <person name="Tice H."/>
            <person name="Goltsman E."/>
            <person name="Land M."/>
            <person name="Hauser L."/>
            <person name="Ivanova N."/>
            <person name="Kyrpides N.C."/>
            <person name="Walter J."/>
        </authorList>
    </citation>
    <scope>NUCLEOTIDE SEQUENCE [LARGE SCALE GENOMIC DNA]</scope>
    <source>
        <strain>DSM 20016</strain>
    </source>
</reference>
<keyword id="KW-0067">ATP-binding</keyword>
<keyword id="KW-0963">Cytoplasm</keyword>
<keyword id="KW-0418">Kinase</keyword>
<keyword id="KW-0547">Nucleotide-binding</keyword>
<keyword id="KW-1185">Reference proteome</keyword>
<keyword id="KW-0808">Transferase</keyword>
<name>KCY_LIMRD</name>
<protein>
    <recommendedName>
        <fullName evidence="1">Cytidylate kinase</fullName>
        <shortName evidence="1">CK</shortName>
        <ecNumber evidence="1">2.7.4.25</ecNumber>
    </recommendedName>
    <alternativeName>
        <fullName evidence="1">Cytidine monophosphate kinase</fullName>
        <shortName evidence="1">CMP kinase</shortName>
    </alternativeName>
</protein>
<comment type="catalytic activity">
    <reaction evidence="1">
        <text>CMP + ATP = CDP + ADP</text>
        <dbReference type="Rhea" id="RHEA:11600"/>
        <dbReference type="ChEBI" id="CHEBI:30616"/>
        <dbReference type="ChEBI" id="CHEBI:58069"/>
        <dbReference type="ChEBI" id="CHEBI:60377"/>
        <dbReference type="ChEBI" id="CHEBI:456216"/>
        <dbReference type="EC" id="2.7.4.25"/>
    </reaction>
</comment>
<comment type="catalytic activity">
    <reaction evidence="1">
        <text>dCMP + ATP = dCDP + ADP</text>
        <dbReference type="Rhea" id="RHEA:25094"/>
        <dbReference type="ChEBI" id="CHEBI:30616"/>
        <dbReference type="ChEBI" id="CHEBI:57566"/>
        <dbReference type="ChEBI" id="CHEBI:58593"/>
        <dbReference type="ChEBI" id="CHEBI:456216"/>
        <dbReference type="EC" id="2.7.4.25"/>
    </reaction>
</comment>
<comment type="subcellular location">
    <subcellularLocation>
        <location evidence="1">Cytoplasm</location>
    </subcellularLocation>
</comment>
<comment type="similarity">
    <text evidence="1">Belongs to the cytidylate kinase family. Type 1 subfamily.</text>
</comment>
<feature type="chain" id="PRO_1000119020" description="Cytidylate kinase">
    <location>
        <begin position="1"/>
        <end position="228"/>
    </location>
</feature>
<feature type="binding site" evidence="1">
    <location>
        <begin position="11"/>
        <end position="19"/>
    </location>
    <ligand>
        <name>ATP</name>
        <dbReference type="ChEBI" id="CHEBI:30616"/>
    </ligand>
</feature>
<dbReference type="EC" id="2.7.4.25" evidence="1"/>
<dbReference type="EMBL" id="CP000705">
    <property type="protein sequence ID" value="ABQ83026.1"/>
    <property type="molecule type" value="Genomic_DNA"/>
</dbReference>
<dbReference type="RefSeq" id="WP_003668107.1">
    <property type="nucleotide sequence ID" value="NC_009513.1"/>
</dbReference>
<dbReference type="SMR" id="A5VJK2"/>
<dbReference type="STRING" id="557436.Lreu_0762"/>
<dbReference type="KEGG" id="lre:Lreu_0762"/>
<dbReference type="PATRIC" id="fig|557436.17.peg.466"/>
<dbReference type="eggNOG" id="COG0283">
    <property type="taxonomic scope" value="Bacteria"/>
</dbReference>
<dbReference type="HOGENOM" id="CLU_079959_0_2_9"/>
<dbReference type="OMA" id="RAITWWM"/>
<dbReference type="Proteomes" id="UP000001991">
    <property type="component" value="Chromosome"/>
</dbReference>
<dbReference type="GO" id="GO:0005829">
    <property type="term" value="C:cytosol"/>
    <property type="evidence" value="ECO:0007669"/>
    <property type="project" value="TreeGrafter"/>
</dbReference>
<dbReference type="GO" id="GO:0005524">
    <property type="term" value="F:ATP binding"/>
    <property type="evidence" value="ECO:0007669"/>
    <property type="project" value="UniProtKB-UniRule"/>
</dbReference>
<dbReference type="GO" id="GO:0036430">
    <property type="term" value="F:CMP kinase activity"/>
    <property type="evidence" value="ECO:0007669"/>
    <property type="project" value="RHEA"/>
</dbReference>
<dbReference type="GO" id="GO:0036431">
    <property type="term" value="F:dCMP kinase activity"/>
    <property type="evidence" value="ECO:0007669"/>
    <property type="project" value="RHEA"/>
</dbReference>
<dbReference type="GO" id="GO:0015949">
    <property type="term" value="P:nucleobase-containing small molecule interconversion"/>
    <property type="evidence" value="ECO:0007669"/>
    <property type="project" value="TreeGrafter"/>
</dbReference>
<dbReference type="GO" id="GO:0006220">
    <property type="term" value="P:pyrimidine nucleotide metabolic process"/>
    <property type="evidence" value="ECO:0007669"/>
    <property type="project" value="UniProtKB-UniRule"/>
</dbReference>
<dbReference type="CDD" id="cd02020">
    <property type="entry name" value="CMPK"/>
    <property type="match status" value="1"/>
</dbReference>
<dbReference type="Gene3D" id="3.40.50.300">
    <property type="entry name" value="P-loop containing nucleotide triphosphate hydrolases"/>
    <property type="match status" value="1"/>
</dbReference>
<dbReference type="HAMAP" id="MF_00238">
    <property type="entry name" value="Cytidyl_kinase_type1"/>
    <property type="match status" value="1"/>
</dbReference>
<dbReference type="InterPro" id="IPR003136">
    <property type="entry name" value="Cytidylate_kin"/>
</dbReference>
<dbReference type="InterPro" id="IPR011994">
    <property type="entry name" value="Cytidylate_kinase_dom"/>
</dbReference>
<dbReference type="InterPro" id="IPR027417">
    <property type="entry name" value="P-loop_NTPase"/>
</dbReference>
<dbReference type="NCBIfam" id="TIGR00017">
    <property type="entry name" value="cmk"/>
    <property type="match status" value="1"/>
</dbReference>
<dbReference type="PANTHER" id="PTHR21299:SF2">
    <property type="entry name" value="CYTIDYLATE KINASE"/>
    <property type="match status" value="1"/>
</dbReference>
<dbReference type="PANTHER" id="PTHR21299">
    <property type="entry name" value="CYTIDYLATE KINASE/PANTOATE-BETA-ALANINE LIGASE"/>
    <property type="match status" value="1"/>
</dbReference>
<dbReference type="Pfam" id="PF02224">
    <property type="entry name" value="Cytidylate_kin"/>
    <property type="match status" value="1"/>
</dbReference>
<dbReference type="SUPFAM" id="SSF52540">
    <property type="entry name" value="P-loop containing nucleoside triphosphate hydrolases"/>
    <property type="match status" value="1"/>
</dbReference>
<gene>
    <name evidence="1" type="primary">cmk</name>
    <name type="ordered locus">Lreu_0762</name>
</gene>